<feature type="chain" id="PRO_1000083928" description="Acetyl-coenzyme A carboxylase carboxyl transferase subunit alpha">
    <location>
        <begin position="1"/>
        <end position="318"/>
    </location>
</feature>
<feature type="domain" description="CoA carboxyltransferase C-terminal" evidence="2">
    <location>
        <begin position="39"/>
        <end position="292"/>
    </location>
</feature>
<feature type="sequence conflict" description="In Ref. 2; ACI50196." evidence="3" ref="2">
    <original>N</original>
    <variation>D</variation>
    <location>
        <position position="106"/>
    </location>
</feature>
<name>ACCA_GLUDA</name>
<gene>
    <name evidence="1" type="primary">accA</name>
    <name type="ordered locus">GDI2181</name>
    <name type="ordered locus">Gdia_0400</name>
</gene>
<accession>A9HL57</accession>
<accession>B5ZCD2</accession>
<protein>
    <recommendedName>
        <fullName evidence="1">Acetyl-coenzyme A carboxylase carboxyl transferase subunit alpha</fullName>
        <shortName evidence="1">ACCase subunit alpha</shortName>
        <shortName evidence="1">Acetyl-CoA carboxylase carboxyltransferase subunit alpha</shortName>
        <ecNumber evidence="1">2.1.3.15</ecNumber>
    </recommendedName>
</protein>
<proteinExistence type="inferred from homology"/>
<reference key="1">
    <citation type="journal article" date="2009" name="BMC Genomics">
        <title>Complete genome sequence of the sugarcane nitrogen-fixing endophyte Gluconacetobacter diazotrophicus Pal5.</title>
        <authorList>
            <person name="Bertalan M."/>
            <person name="Albano R."/>
            <person name="de Padua V."/>
            <person name="Rouws L."/>
            <person name="Rojas C."/>
            <person name="Hemerly A."/>
            <person name="Teixeira K."/>
            <person name="Schwab S."/>
            <person name="Araujo J."/>
            <person name="Oliveira A."/>
            <person name="Franca L."/>
            <person name="Magalhaes V."/>
            <person name="Alqueres S."/>
            <person name="Cardoso A."/>
            <person name="Almeida W."/>
            <person name="Loureiro M.M."/>
            <person name="Nogueira E."/>
            <person name="Cidade D."/>
            <person name="Oliveira D."/>
            <person name="Simao T."/>
            <person name="Macedo J."/>
            <person name="Valadao A."/>
            <person name="Dreschsel M."/>
            <person name="Freitas F."/>
            <person name="Vidal M."/>
            <person name="Guedes H."/>
            <person name="Rodrigues E."/>
            <person name="Meneses C."/>
            <person name="Brioso P."/>
            <person name="Pozzer L."/>
            <person name="Figueiredo D."/>
            <person name="Montano H."/>
            <person name="Junior J."/>
            <person name="de Souza Filho G."/>
            <person name="Martin Quintana Flores V."/>
            <person name="Ferreira B."/>
            <person name="Branco A."/>
            <person name="Gonzalez P."/>
            <person name="Guillobel H."/>
            <person name="Lemos M."/>
            <person name="Seibel L."/>
            <person name="Macedo J."/>
            <person name="Alves-Ferreira M."/>
            <person name="Sachetto-Martins G."/>
            <person name="Coelho A."/>
            <person name="Santos E."/>
            <person name="Amaral G."/>
            <person name="Neves A."/>
            <person name="Pacheco A.B."/>
            <person name="Carvalho D."/>
            <person name="Lery L."/>
            <person name="Bisch P."/>
            <person name="Rossle S.C."/>
            <person name="Urmenyi T."/>
            <person name="Rael Pereira A."/>
            <person name="Silva R."/>
            <person name="Rondinelli E."/>
            <person name="von Kruger W."/>
            <person name="Martins O."/>
            <person name="Baldani J.I."/>
            <person name="Ferreira P.C."/>
        </authorList>
    </citation>
    <scope>NUCLEOTIDE SEQUENCE [LARGE SCALE GENOMIC DNA]</scope>
    <source>
        <strain>ATCC 49037 / DSM 5601 / CCUG 37298 / CIP 103539 / LMG 7603 / PAl5</strain>
    </source>
</reference>
<reference key="2">
    <citation type="journal article" date="2010" name="Stand. Genomic Sci.">
        <title>Two genome sequences of the same bacterial strain, Gluconacetobacter diazotrophicus PAl 5, suggest a new standard in genome sequence submission.</title>
        <authorList>
            <person name="Giongo A."/>
            <person name="Tyler H.L."/>
            <person name="Zipperer U.N."/>
            <person name="Triplett E.W."/>
        </authorList>
    </citation>
    <scope>NUCLEOTIDE SEQUENCE [LARGE SCALE GENOMIC DNA]</scope>
    <source>
        <strain>ATCC 49037 / DSM 5601 / CCUG 37298 / CIP 103539 / LMG 7603 / PAl5</strain>
    </source>
</reference>
<keyword id="KW-0067">ATP-binding</keyword>
<keyword id="KW-0963">Cytoplasm</keyword>
<keyword id="KW-0275">Fatty acid biosynthesis</keyword>
<keyword id="KW-0276">Fatty acid metabolism</keyword>
<keyword id="KW-0444">Lipid biosynthesis</keyword>
<keyword id="KW-0443">Lipid metabolism</keyword>
<keyword id="KW-0547">Nucleotide-binding</keyword>
<keyword id="KW-1185">Reference proteome</keyword>
<keyword id="KW-0808">Transferase</keyword>
<sequence>MRQFLDFEKSVAELENKIDELRKMSEPDGINLAEEIARLTDKSEKQLRAAYAKLSPWQKVQVARHAQRPHAADYIGTLIQDFTPLAGDRLFGEDKAVIGGIGRFQNQPVVVIGTERGSELESRLAHNFGMARPEGYRKAQRLMELAGRFGMPILTFIDTSGAWPGIDAEARGQAEAIARSIDTCLSAPVPVIATVIGEGGSGGAIALGAGDRVMMLEHAIYSVISPEACASILWRDPKQATSAAEALKLTAQDLLQLKLIDRIIPEPVGGAQRDPESTIRSVGDSIAAELPDLLSLSAPMLVAQRREKFLAMGRDSLS</sequence>
<comment type="function">
    <text evidence="1">Component of the acetyl coenzyme A carboxylase (ACC) complex. First, biotin carboxylase catalyzes the carboxylation of biotin on its carrier protein (BCCP) and then the CO(2) group is transferred by the carboxyltransferase to acetyl-CoA to form malonyl-CoA.</text>
</comment>
<comment type="catalytic activity">
    <reaction evidence="1">
        <text>N(6)-carboxybiotinyl-L-lysyl-[protein] + acetyl-CoA = N(6)-biotinyl-L-lysyl-[protein] + malonyl-CoA</text>
        <dbReference type="Rhea" id="RHEA:54728"/>
        <dbReference type="Rhea" id="RHEA-COMP:10505"/>
        <dbReference type="Rhea" id="RHEA-COMP:10506"/>
        <dbReference type="ChEBI" id="CHEBI:57288"/>
        <dbReference type="ChEBI" id="CHEBI:57384"/>
        <dbReference type="ChEBI" id="CHEBI:83144"/>
        <dbReference type="ChEBI" id="CHEBI:83145"/>
        <dbReference type="EC" id="2.1.3.15"/>
    </reaction>
</comment>
<comment type="pathway">
    <text evidence="1">Lipid metabolism; malonyl-CoA biosynthesis; malonyl-CoA from acetyl-CoA: step 1/1.</text>
</comment>
<comment type="subunit">
    <text evidence="1">Acetyl-CoA carboxylase is a heterohexamer composed of biotin carboxyl carrier protein (AccB), biotin carboxylase (AccC) and two subunits each of ACCase subunit alpha (AccA) and ACCase subunit beta (AccD).</text>
</comment>
<comment type="subcellular location">
    <subcellularLocation>
        <location evidence="1">Cytoplasm</location>
    </subcellularLocation>
</comment>
<comment type="similarity">
    <text evidence="1">Belongs to the AccA family.</text>
</comment>
<organism>
    <name type="scientific">Gluconacetobacter diazotrophicus (strain ATCC 49037 / DSM 5601 / CCUG 37298 / CIP 103539 / LMG 7603 / PAl5)</name>
    <dbReference type="NCBI Taxonomy" id="272568"/>
    <lineage>
        <taxon>Bacteria</taxon>
        <taxon>Pseudomonadati</taxon>
        <taxon>Pseudomonadota</taxon>
        <taxon>Alphaproteobacteria</taxon>
        <taxon>Acetobacterales</taxon>
        <taxon>Acetobacteraceae</taxon>
        <taxon>Gluconacetobacter</taxon>
    </lineage>
</organism>
<evidence type="ECO:0000255" key="1">
    <source>
        <dbReference type="HAMAP-Rule" id="MF_00823"/>
    </source>
</evidence>
<evidence type="ECO:0000255" key="2">
    <source>
        <dbReference type="PROSITE-ProRule" id="PRU01137"/>
    </source>
</evidence>
<evidence type="ECO:0000305" key="3"/>
<dbReference type="EC" id="2.1.3.15" evidence="1"/>
<dbReference type="EMBL" id="AM889285">
    <property type="protein sequence ID" value="CAP56124.1"/>
    <property type="molecule type" value="Genomic_DNA"/>
</dbReference>
<dbReference type="EMBL" id="CP001189">
    <property type="protein sequence ID" value="ACI50196.1"/>
    <property type="molecule type" value="Genomic_DNA"/>
</dbReference>
<dbReference type="RefSeq" id="WP_012226009.1">
    <property type="nucleotide sequence ID" value="NC_010125.1"/>
</dbReference>
<dbReference type="RefSeq" id="WP_012553106.1">
    <property type="nucleotide sequence ID" value="NC_011365.1"/>
</dbReference>
<dbReference type="SMR" id="A9HL57"/>
<dbReference type="STRING" id="272568.GDI2181"/>
<dbReference type="KEGG" id="gdi:GDI2181"/>
<dbReference type="KEGG" id="gdj:Gdia_0400"/>
<dbReference type="eggNOG" id="COG0825">
    <property type="taxonomic scope" value="Bacteria"/>
</dbReference>
<dbReference type="HOGENOM" id="CLU_015486_0_2_5"/>
<dbReference type="OrthoDB" id="9808023at2"/>
<dbReference type="UniPathway" id="UPA00655">
    <property type="reaction ID" value="UER00711"/>
</dbReference>
<dbReference type="Proteomes" id="UP000001176">
    <property type="component" value="Chromosome"/>
</dbReference>
<dbReference type="GO" id="GO:0009317">
    <property type="term" value="C:acetyl-CoA carboxylase complex"/>
    <property type="evidence" value="ECO:0007669"/>
    <property type="project" value="InterPro"/>
</dbReference>
<dbReference type="GO" id="GO:0003989">
    <property type="term" value="F:acetyl-CoA carboxylase activity"/>
    <property type="evidence" value="ECO:0007669"/>
    <property type="project" value="InterPro"/>
</dbReference>
<dbReference type="GO" id="GO:0005524">
    <property type="term" value="F:ATP binding"/>
    <property type="evidence" value="ECO:0007669"/>
    <property type="project" value="UniProtKB-KW"/>
</dbReference>
<dbReference type="GO" id="GO:0016743">
    <property type="term" value="F:carboxyl- or carbamoyltransferase activity"/>
    <property type="evidence" value="ECO:0007669"/>
    <property type="project" value="UniProtKB-UniRule"/>
</dbReference>
<dbReference type="GO" id="GO:0006633">
    <property type="term" value="P:fatty acid biosynthetic process"/>
    <property type="evidence" value="ECO:0007669"/>
    <property type="project" value="UniProtKB-KW"/>
</dbReference>
<dbReference type="GO" id="GO:2001295">
    <property type="term" value="P:malonyl-CoA biosynthetic process"/>
    <property type="evidence" value="ECO:0007669"/>
    <property type="project" value="UniProtKB-UniRule"/>
</dbReference>
<dbReference type="Gene3D" id="3.90.226.10">
    <property type="entry name" value="2-enoyl-CoA Hydratase, Chain A, domain 1"/>
    <property type="match status" value="1"/>
</dbReference>
<dbReference type="HAMAP" id="MF_00823">
    <property type="entry name" value="AcetylCoA_CT_alpha"/>
    <property type="match status" value="1"/>
</dbReference>
<dbReference type="InterPro" id="IPR001095">
    <property type="entry name" value="Acetyl_CoA_COase_a_su"/>
</dbReference>
<dbReference type="InterPro" id="IPR029045">
    <property type="entry name" value="ClpP/crotonase-like_dom_sf"/>
</dbReference>
<dbReference type="InterPro" id="IPR011763">
    <property type="entry name" value="COA_CT_C"/>
</dbReference>
<dbReference type="NCBIfam" id="TIGR00513">
    <property type="entry name" value="accA"/>
    <property type="match status" value="1"/>
</dbReference>
<dbReference type="NCBIfam" id="NF041504">
    <property type="entry name" value="AccA_sub"/>
    <property type="match status" value="1"/>
</dbReference>
<dbReference type="NCBIfam" id="NF004344">
    <property type="entry name" value="PRK05724.1"/>
    <property type="match status" value="1"/>
</dbReference>
<dbReference type="PANTHER" id="PTHR42853">
    <property type="entry name" value="ACETYL-COENZYME A CARBOXYLASE CARBOXYL TRANSFERASE SUBUNIT ALPHA"/>
    <property type="match status" value="1"/>
</dbReference>
<dbReference type="PANTHER" id="PTHR42853:SF3">
    <property type="entry name" value="ACETYL-COENZYME A CARBOXYLASE CARBOXYL TRANSFERASE SUBUNIT ALPHA, CHLOROPLASTIC"/>
    <property type="match status" value="1"/>
</dbReference>
<dbReference type="Pfam" id="PF03255">
    <property type="entry name" value="ACCA"/>
    <property type="match status" value="1"/>
</dbReference>
<dbReference type="PRINTS" id="PR01069">
    <property type="entry name" value="ACCCTRFRASEA"/>
</dbReference>
<dbReference type="SUPFAM" id="SSF52096">
    <property type="entry name" value="ClpP/crotonase"/>
    <property type="match status" value="1"/>
</dbReference>
<dbReference type="PROSITE" id="PS50989">
    <property type="entry name" value="COA_CT_CTER"/>
    <property type="match status" value="1"/>
</dbReference>